<accession>Q11B42</accession>
<dbReference type="EC" id="2.7.7.56" evidence="1"/>
<dbReference type="EMBL" id="CP000390">
    <property type="protein sequence ID" value="ABG65383.1"/>
    <property type="molecule type" value="Genomic_DNA"/>
</dbReference>
<dbReference type="SMR" id="Q11B42"/>
<dbReference type="STRING" id="266779.Meso_4016"/>
<dbReference type="KEGG" id="mes:Meso_4016"/>
<dbReference type="eggNOG" id="COG0689">
    <property type="taxonomic scope" value="Bacteria"/>
</dbReference>
<dbReference type="HOGENOM" id="CLU_050858_0_0_5"/>
<dbReference type="OrthoDB" id="9802265at2"/>
<dbReference type="GO" id="GO:0000175">
    <property type="term" value="F:3'-5'-RNA exonuclease activity"/>
    <property type="evidence" value="ECO:0007669"/>
    <property type="project" value="UniProtKB-UniRule"/>
</dbReference>
<dbReference type="GO" id="GO:0000049">
    <property type="term" value="F:tRNA binding"/>
    <property type="evidence" value="ECO:0007669"/>
    <property type="project" value="UniProtKB-UniRule"/>
</dbReference>
<dbReference type="GO" id="GO:0009022">
    <property type="term" value="F:tRNA nucleotidyltransferase activity"/>
    <property type="evidence" value="ECO:0007669"/>
    <property type="project" value="UniProtKB-UniRule"/>
</dbReference>
<dbReference type="GO" id="GO:0016075">
    <property type="term" value="P:rRNA catabolic process"/>
    <property type="evidence" value="ECO:0007669"/>
    <property type="project" value="UniProtKB-UniRule"/>
</dbReference>
<dbReference type="GO" id="GO:0006364">
    <property type="term" value="P:rRNA processing"/>
    <property type="evidence" value="ECO:0007669"/>
    <property type="project" value="UniProtKB-KW"/>
</dbReference>
<dbReference type="GO" id="GO:0008033">
    <property type="term" value="P:tRNA processing"/>
    <property type="evidence" value="ECO:0007669"/>
    <property type="project" value="UniProtKB-UniRule"/>
</dbReference>
<dbReference type="CDD" id="cd11362">
    <property type="entry name" value="RNase_PH_bact"/>
    <property type="match status" value="1"/>
</dbReference>
<dbReference type="FunFam" id="3.30.230.70:FF:000003">
    <property type="entry name" value="Ribonuclease PH"/>
    <property type="match status" value="1"/>
</dbReference>
<dbReference type="Gene3D" id="3.30.230.70">
    <property type="entry name" value="GHMP Kinase, N-terminal domain"/>
    <property type="match status" value="1"/>
</dbReference>
<dbReference type="HAMAP" id="MF_00564">
    <property type="entry name" value="RNase_PH"/>
    <property type="match status" value="1"/>
</dbReference>
<dbReference type="InterPro" id="IPR001247">
    <property type="entry name" value="ExoRNase_PH_dom1"/>
</dbReference>
<dbReference type="InterPro" id="IPR015847">
    <property type="entry name" value="ExoRNase_PH_dom2"/>
</dbReference>
<dbReference type="InterPro" id="IPR036345">
    <property type="entry name" value="ExoRNase_PH_dom2_sf"/>
</dbReference>
<dbReference type="InterPro" id="IPR027408">
    <property type="entry name" value="PNPase/RNase_PH_dom_sf"/>
</dbReference>
<dbReference type="InterPro" id="IPR020568">
    <property type="entry name" value="Ribosomal_Su5_D2-typ_SF"/>
</dbReference>
<dbReference type="InterPro" id="IPR050080">
    <property type="entry name" value="RNase_PH"/>
</dbReference>
<dbReference type="InterPro" id="IPR002381">
    <property type="entry name" value="RNase_PH_bac-type"/>
</dbReference>
<dbReference type="InterPro" id="IPR018336">
    <property type="entry name" value="RNase_PH_CS"/>
</dbReference>
<dbReference type="NCBIfam" id="TIGR01966">
    <property type="entry name" value="RNasePH"/>
    <property type="match status" value="1"/>
</dbReference>
<dbReference type="PANTHER" id="PTHR11953">
    <property type="entry name" value="EXOSOME COMPLEX COMPONENT"/>
    <property type="match status" value="1"/>
</dbReference>
<dbReference type="PANTHER" id="PTHR11953:SF0">
    <property type="entry name" value="EXOSOME COMPLEX COMPONENT RRP41"/>
    <property type="match status" value="1"/>
</dbReference>
<dbReference type="Pfam" id="PF01138">
    <property type="entry name" value="RNase_PH"/>
    <property type="match status" value="1"/>
</dbReference>
<dbReference type="Pfam" id="PF03725">
    <property type="entry name" value="RNase_PH_C"/>
    <property type="match status" value="1"/>
</dbReference>
<dbReference type="SUPFAM" id="SSF55666">
    <property type="entry name" value="Ribonuclease PH domain 2-like"/>
    <property type="match status" value="1"/>
</dbReference>
<dbReference type="SUPFAM" id="SSF54211">
    <property type="entry name" value="Ribosomal protein S5 domain 2-like"/>
    <property type="match status" value="1"/>
</dbReference>
<dbReference type="PROSITE" id="PS01277">
    <property type="entry name" value="RIBONUCLEASE_PH"/>
    <property type="match status" value="1"/>
</dbReference>
<name>RNPH_CHESB</name>
<sequence length="238" mass="26087">MRPSRRQPDEMRAISFERGVSKHAEGSCLVRFGDTHVLCTASLEEKVPAWLRNSGKGWVTAEYGMLPRSTGERMRREAASGKQGGRTLEIQRLVGRSLRSVIDLEALGEMQITVDCDVLQADGGTRTAAITGGFVALHDCLSWMQARQMVTVERVLKDHVAAISCGIYDGTPVLDLDYAEDSAAETDANFVMTGKGGIVEIQGTAEGAPFTEEEFHELLRLARKGIFRLVELQKMAVS</sequence>
<keyword id="KW-0548">Nucleotidyltransferase</keyword>
<keyword id="KW-0694">RNA-binding</keyword>
<keyword id="KW-0698">rRNA processing</keyword>
<keyword id="KW-0808">Transferase</keyword>
<keyword id="KW-0819">tRNA processing</keyword>
<keyword id="KW-0820">tRNA-binding</keyword>
<gene>
    <name evidence="1" type="primary">rph</name>
    <name type="ordered locus">Meso_4016</name>
</gene>
<feature type="chain" id="PRO_1000024825" description="Ribonuclease PH">
    <location>
        <begin position="1"/>
        <end position="238"/>
    </location>
</feature>
<feature type="binding site" evidence="1">
    <location>
        <position position="86"/>
    </location>
    <ligand>
        <name>phosphate</name>
        <dbReference type="ChEBI" id="CHEBI:43474"/>
        <note>substrate</note>
    </ligand>
</feature>
<feature type="binding site" evidence="1">
    <location>
        <begin position="124"/>
        <end position="126"/>
    </location>
    <ligand>
        <name>phosphate</name>
        <dbReference type="ChEBI" id="CHEBI:43474"/>
        <note>substrate</note>
    </ligand>
</feature>
<proteinExistence type="inferred from homology"/>
<reference key="1">
    <citation type="submission" date="2006-06" db="EMBL/GenBank/DDBJ databases">
        <title>Complete sequence of chromosome of Mesorhizobium sp. BNC1.</title>
        <authorList>
            <consortium name="US DOE Joint Genome Institute"/>
            <person name="Copeland A."/>
            <person name="Lucas S."/>
            <person name="Lapidus A."/>
            <person name="Barry K."/>
            <person name="Detter J.C."/>
            <person name="Glavina del Rio T."/>
            <person name="Hammon N."/>
            <person name="Israni S."/>
            <person name="Dalin E."/>
            <person name="Tice H."/>
            <person name="Pitluck S."/>
            <person name="Chertkov O."/>
            <person name="Brettin T."/>
            <person name="Bruce D."/>
            <person name="Han C."/>
            <person name="Tapia R."/>
            <person name="Gilna P."/>
            <person name="Schmutz J."/>
            <person name="Larimer F."/>
            <person name="Land M."/>
            <person name="Hauser L."/>
            <person name="Kyrpides N."/>
            <person name="Mikhailova N."/>
            <person name="Richardson P."/>
        </authorList>
    </citation>
    <scope>NUCLEOTIDE SEQUENCE [LARGE SCALE GENOMIC DNA]</scope>
    <source>
        <strain>BNC1</strain>
    </source>
</reference>
<organism>
    <name type="scientific">Chelativorans sp. (strain BNC1)</name>
    <dbReference type="NCBI Taxonomy" id="266779"/>
    <lineage>
        <taxon>Bacteria</taxon>
        <taxon>Pseudomonadati</taxon>
        <taxon>Pseudomonadota</taxon>
        <taxon>Alphaproteobacteria</taxon>
        <taxon>Hyphomicrobiales</taxon>
        <taxon>Phyllobacteriaceae</taxon>
        <taxon>Chelativorans</taxon>
    </lineage>
</organism>
<protein>
    <recommendedName>
        <fullName evidence="1">Ribonuclease PH</fullName>
        <shortName evidence="1">RNase PH</shortName>
        <ecNumber evidence="1">2.7.7.56</ecNumber>
    </recommendedName>
    <alternativeName>
        <fullName evidence="1">tRNA nucleotidyltransferase</fullName>
    </alternativeName>
</protein>
<evidence type="ECO:0000255" key="1">
    <source>
        <dbReference type="HAMAP-Rule" id="MF_00564"/>
    </source>
</evidence>
<comment type="function">
    <text evidence="1">Phosphorolytic 3'-5' exoribonuclease that plays an important role in tRNA 3'-end maturation. Removes nucleotide residues following the 3'-CCA terminus of tRNAs; can also add nucleotides to the ends of RNA molecules by using nucleoside diphosphates as substrates, but this may not be physiologically important. Probably plays a role in initiation of 16S rRNA degradation (leading to ribosome degradation) during starvation.</text>
</comment>
<comment type="catalytic activity">
    <reaction evidence="1">
        <text>tRNA(n+1) + phosphate = tRNA(n) + a ribonucleoside 5'-diphosphate</text>
        <dbReference type="Rhea" id="RHEA:10628"/>
        <dbReference type="Rhea" id="RHEA-COMP:17343"/>
        <dbReference type="Rhea" id="RHEA-COMP:17344"/>
        <dbReference type="ChEBI" id="CHEBI:43474"/>
        <dbReference type="ChEBI" id="CHEBI:57930"/>
        <dbReference type="ChEBI" id="CHEBI:173114"/>
        <dbReference type="EC" id="2.7.7.56"/>
    </reaction>
</comment>
<comment type="subunit">
    <text evidence="1">Homohexameric ring arranged as a trimer of dimers.</text>
</comment>
<comment type="similarity">
    <text evidence="1">Belongs to the RNase PH family.</text>
</comment>